<name>TRM1_YEAST</name>
<keyword id="KW-0007">Acetylation</keyword>
<keyword id="KW-0024">Alternative initiation</keyword>
<keyword id="KW-0472">Membrane</keyword>
<keyword id="KW-0479">Metal-binding</keyword>
<keyword id="KW-0489">Methyltransferase</keyword>
<keyword id="KW-0496">Mitochondrion</keyword>
<keyword id="KW-0539">Nucleus</keyword>
<keyword id="KW-1185">Reference proteome</keyword>
<keyword id="KW-0694">RNA-binding</keyword>
<keyword id="KW-0949">S-adenosyl-L-methionine</keyword>
<keyword id="KW-0808">Transferase</keyword>
<keyword id="KW-0809">Transit peptide</keyword>
<keyword id="KW-0819">tRNA processing</keyword>
<keyword id="KW-0820">tRNA-binding</keyword>
<keyword id="KW-0862">Zinc</keyword>
<organism>
    <name type="scientific">Saccharomyces cerevisiae (strain ATCC 204508 / S288c)</name>
    <name type="common">Baker's yeast</name>
    <dbReference type="NCBI Taxonomy" id="559292"/>
    <lineage>
        <taxon>Eukaryota</taxon>
        <taxon>Fungi</taxon>
        <taxon>Dikarya</taxon>
        <taxon>Ascomycota</taxon>
        <taxon>Saccharomycotina</taxon>
        <taxon>Saccharomycetes</taxon>
        <taxon>Saccharomycetales</taxon>
        <taxon>Saccharomycetaceae</taxon>
        <taxon>Saccharomyces</taxon>
    </lineage>
</organism>
<dbReference type="EC" id="2.1.1.216" evidence="9"/>
<dbReference type="EMBL" id="M17193">
    <property type="protein sequence ID" value="AAA35150.1"/>
    <property type="molecule type" value="Genomic_DNA"/>
</dbReference>
<dbReference type="EMBL" id="AF086825">
    <property type="protein sequence ID" value="AAD29858.1"/>
    <property type="molecule type" value="Genomic_DNA"/>
</dbReference>
<dbReference type="EMBL" id="AF086826">
    <property type="protein sequence ID" value="AAD29859.1"/>
    <property type="molecule type" value="Genomic_DNA"/>
</dbReference>
<dbReference type="EMBL" id="Z48758">
    <property type="protein sequence ID" value="CAA88673.1"/>
    <property type="molecule type" value="Genomic_DNA"/>
</dbReference>
<dbReference type="EMBL" id="BK006938">
    <property type="protein sequence ID" value="DAA11966.1"/>
    <property type="molecule type" value="Genomic_DNA"/>
</dbReference>
<dbReference type="PIR" id="A28323">
    <property type="entry name" value="A28323"/>
</dbReference>
<dbReference type="RefSeq" id="NP_010405.3">
    <molecule id="P15565-1"/>
    <property type="nucleotide sequence ID" value="NM_001180428.3"/>
</dbReference>
<dbReference type="SMR" id="P15565"/>
<dbReference type="BioGRID" id="32176">
    <property type="interactions" value="222"/>
</dbReference>
<dbReference type="DIP" id="DIP-5202N"/>
<dbReference type="FunCoup" id="P15565">
    <property type="interactions" value="1434"/>
</dbReference>
<dbReference type="IntAct" id="P15565">
    <property type="interactions" value="19"/>
</dbReference>
<dbReference type="MINT" id="P15565"/>
<dbReference type="STRING" id="4932.YDR120C"/>
<dbReference type="iPTMnet" id="P15565"/>
<dbReference type="PaxDb" id="4932-YDR120C"/>
<dbReference type="PeptideAtlas" id="P15565"/>
<dbReference type="EnsemblFungi" id="YDR120C_mRNA">
    <molecule id="P15565-1"/>
    <property type="protein sequence ID" value="YDR120C"/>
    <property type="gene ID" value="YDR120C"/>
</dbReference>
<dbReference type="GeneID" id="851698"/>
<dbReference type="KEGG" id="sce:YDR120C"/>
<dbReference type="AGR" id="SGD:S000002527"/>
<dbReference type="SGD" id="S000002527">
    <property type="gene designation" value="TRM1"/>
</dbReference>
<dbReference type="VEuPathDB" id="FungiDB:YDR120C"/>
<dbReference type="eggNOG" id="KOG1253">
    <property type="taxonomic scope" value="Eukaryota"/>
</dbReference>
<dbReference type="GeneTree" id="ENSGT00530000063646"/>
<dbReference type="HOGENOM" id="CLU_010862_4_1_1"/>
<dbReference type="InParanoid" id="P15565"/>
<dbReference type="OMA" id="MKCCHEM"/>
<dbReference type="OrthoDB" id="6349953at2759"/>
<dbReference type="BioCyc" id="MetaCyc:G3O-29720-MONOMER"/>
<dbReference type="BioCyc" id="YEAST:G3O-29720-MONOMER"/>
<dbReference type="BRENDA" id="2.1.1.216">
    <property type="organism ID" value="5243"/>
</dbReference>
<dbReference type="BioGRID-ORCS" id="851698">
    <property type="hits" value="0 hits in 10 CRISPR screens"/>
</dbReference>
<dbReference type="PRO" id="PR:P15565"/>
<dbReference type="Proteomes" id="UP000002311">
    <property type="component" value="Chromosome IV"/>
</dbReference>
<dbReference type="RNAct" id="P15565">
    <property type="molecule type" value="protein"/>
</dbReference>
<dbReference type="GO" id="GO:0005739">
    <property type="term" value="C:mitochondrion"/>
    <property type="evidence" value="ECO:0000314"/>
    <property type="project" value="SGD"/>
</dbReference>
<dbReference type="GO" id="GO:0005635">
    <property type="term" value="C:nuclear envelope"/>
    <property type="evidence" value="ECO:0000314"/>
    <property type="project" value="SGD"/>
</dbReference>
<dbReference type="GO" id="GO:0005637">
    <property type="term" value="C:nuclear inner membrane"/>
    <property type="evidence" value="ECO:0000314"/>
    <property type="project" value="SGD"/>
</dbReference>
<dbReference type="GO" id="GO:0005634">
    <property type="term" value="C:nucleus"/>
    <property type="evidence" value="ECO:0000318"/>
    <property type="project" value="GO_Central"/>
</dbReference>
<dbReference type="GO" id="GO:0160104">
    <property type="term" value="F:tRNA (guanine(26)-N2)-dimethyltransferase activity"/>
    <property type="evidence" value="ECO:0007669"/>
    <property type="project" value="UniProtKB-EC"/>
</dbReference>
<dbReference type="GO" id="GO:0160103">
    <property type="term" value="F:tRNA (guanine(26)-N2/guanine(27)-N2)-dimethyltransferase activity"/>
    <property type="evidence" value="ECO:0000314"/>
    <property type="project" value="SGD"/>
</dbReference>
<dbReference type="GO" id="GO:0000049">
    <property type="term" value="F:tRNA binding"/>
    <property type="evidence" value="ECO:0007669"/>
    <property type="project" value="UniProtKB-KW"/>
</dbReference>
<dbReference type="GO" id="GO:0030488">
    <property type="term" value="P:tRNA methylation"/>
    <property type="evidence" value="ECO:0000315"/>
    <property type="project" value="SGD"/>
</dbReference>
<dbReference type="GO" id="GO:0002940">
    <property type="term" value="P:tRNA N2-guanine methylation"/>
    <property type="evidence" value="ECO:0000318"/>
    <property type="project" value="GO_Central"/>
</dbReference>
<dbReference type="CDD" id="cd02440">
    <property type="entry name" value="AdoMet_MTases"/>
    <property type="match status" value="1"/>
</dbReference>
<dbReference type="FunFam" id="3.30.56.70:FF:000001">
    <property type="entry name" value="tRNA (guanine(26)-N(2))-dimethyltransferase"/>
    <property type="match status" value="1"/>
</dbReference>
<dbReference type="Gene3D" id="3.30.56.70">
    <property type="entry name" value="N2,N2-dimethylguanosine tRNA methyltransferase, C-terminal domain"/>
    <property type="match status" value="1"/>
</dbReference>
<dbReference type="Gene3D" id="3.40.50.150">
    <property type="entry name" value="Vaccinia Virus protein VP39"/>
    <property type="match status" value="1"/>
</dbReference>
<dbReference type="InterPro" id="IPR029063">
    <property type="entry name" value="SAM-dependent_MTases_sf"/>
</dbReference>
<dbReference type="InterPro" id="IPR002905">
    <property type="entry name" value="Trm1"/>
</dbReference>
<dbReference type="InterPro" id="IPR042296">
    <property type="entry name" value="tRNA_met_Trm1_C"/>
</dbReference>
<dbReference type="NCBIfam" id="TIGR00308">
    <property type="entry name" value="TRM1"/>
    <property type="match status" value="1"/>
</dbReference>
<dbReference type="PANTHER" id="PTHR10631">
    <property type="entry name" value="N 2 ,N 2 -DIMETHYLGUANOSINE TRNA METHYLTRANSFERASE"/>
    <property type="match status" value="1"/>
</dbReference>
<dbReference type="PANTHER" id="PTHR10631:SF3">
    <property type="entry name" value="TRNA (GUANINE(26)-N(2))-DIMETHYLTRANSFERASE"/>
    <property type="match status" value="1"/>
</dbReference>
<dbReference type="Pfam" id="PF02005">
    <property type="entry name" value="TRM"/>
    <property type="match status" value="1"/>
</dbReference>
<dbReference type="SUPFAM" id="SSF53335">
    <property type="entry name" value="S-adenosyl-L-methionine-dependent methyltransferases"/>
    <property type="match status" value="1"/>
</dbReference>
<dbReference type="PROSITE" id="PS51626">
    <property type="entry name" value="SAM_MT_TRM1"/>
    <property type="match status" value="1"/>
</dbReference>
<protein>
    <recommendedName>
        <fullName>tRNA (guanine(26)-N(2))-dimethyltransferase, mitochondrial</fullName>
        <ecNumber evidence="9">2.1.1.216</ecNumber>
    </recommendedName>
    <alternativeName>
        <fullName>tRNA 2,2-dimethylguanosine-26 methyltransferase</fullName>
    </alternativeName>
    <alternativeName>
        <fullName>tRNA(guanine-26,N(2)-N(2)) methyltransferase</fullName>
    </alternativeName>
    <alternativeName>
        <fullName>tRNA(m(2,2)G26)dimethyltransferase</fullName>
    </alternativeName>
</protein>
<proteinExistence type="evidence at protein level"/>
<reference key="1">
    <citation type="journal article" date="1987" name="Proc. Natl. Acad. Sci. U.S.A.">
        <title>Amino-terminal extension generated from an upstream AUG codon is not required for mitochondrial import of yeast N2,N2-dimethylguanosine-specific tRNA methyltransferase.</title>
        <authorList>
            <person name="Ellis S.R."/>
            <person name="Hopper A.K."/>
            <person name="Martin N.C."/>
        </authorList>
    </citation>
    <scope>NUCLEOTIDE SEQUENCE [GENOMIC DNA]</scope>
    <scope>ALTERNATIVE INITIATION</scope>
</reference>
<reference key="2">
    <citation type="journal article" date="1998" name="Nucleic Acids Res.">
        <title>Point and deletion mutations eliminate one or both methyl group transfers catalysed by the yeast TRM1 encoded tRNA (m22G26)dimethyltransferase.</title>
        <authorList>
            <person name="Liu J."/>
            <person name="Liu J."/>
            <person name="Straby K.B."/>
        </authorList>
    </citation>
    <scope>NUCLEOTIDE SEQUENCE [GENOMIC DNA]</scope>
    <scope>FUNCTION</scope>
    <scope>CATALYTIC ACTIVITY</scope>
    <source>
        <strain>D4</strain>
        <strain>YF+</strain>
    </source>
</reference>
<reference key="3">
    <citation type="journal article" date="1997" name="Nature">
        <title>The nucleotide sequence of Saccharomyces cerevisiae chromosome IV.</title>
        <authorList>
            <person name="Jacq C."/>
            <person name="Alt-Moerbe J."/>
            <person name="Andre B."/>
            <person name="Arnold W."/>
            <person name="Bahr A."/>
            <person name="Ballesta J.P.G."/>
            <person name="Bargues M."/>
            <person name="Baron L."/>
            <person name="Becker A."/>
            <person name="Biteau N."/>
            <person name="Bloecker H."/>
            <person name="Blugeon C."/>
            <person name="Boskovic J."/>
            <person name="Brandt P."/>
            <person name="Brueckner M."/>
            <person name="Buitrago M.J."/>
            <person name="Coster F."/>
            <person name="Delaveau T."/>
            <person name="del Rey F."/>
            <person name="Dujon B."/>
            <person name="Eide L.G."/>
            <person name="Garcia-Cantalejo J.M."/>
            <person name="Goffeau A."/>
            <person name="Gomez-Peris A."/>
            <person name="Granotier C."/>
            <person name="Hanemann V."/>
            <person name="Hankeln T."/>
            <person name="Hoheisel J.D."/>
            <person name="Jaeger W."/>
            <person name="Jimenez A."/>
            <person name="Jonniaux J.-L."/>
            <person name="Kraemer C."/>
            <person name="Kuester H."/>
            <person name="Laamanen P."/>
            <person name="Legros Y."/>
            <person name="Louis E.J."/>
            <person name="Moeller-Rieker S."/>
            <person name="Monnet A."/>
            <person name="Moro M."/>
            <person name="Mueller-Auer S."/>
            <person name="Nussbaumer B."/>
            <person name="Paricio N."/>
            <person name="Paulin L."/>
            <person name="Perea J."/>
            <person name="Perez-Alonso M."/>
            <person name="Perez-Ortin J.E."/>
            <person name="Pohl T.M."/>
            <person name="Prydz H."/>
            <person name="Purnelle B."/>
            <person name="Rasmussen S.W."/>
            <person name="Remacha M.A."/>
            <person name="Revuelta J.L."/>
            <person name="Rieger M."/>
            <person name="Salom D."/>
            <person name="Saluz H.P."/>
            <person name="Saiz J.E."/>
            <person name="Saren A.-M."/>
            <person name="Schaefer M."/>
            <person name="Scharfe M."/>
            <person name="Schmidt E.R."/>
            <person name="Schneider C."/>
            <person name="Scholler P."/>
            <person name="Schwarz S."/>
            <person name="Soler-Mira A."/>
            <person name="Urrestarazu L.A."/>
            <person name="Verhasselt P."/>
            <person name="Vissers S."/>
            <person name="Voet M."/>
            <person name="Volckaert G."/>
            <person name="Wagner G."/>
            <person name="Wambutt R."/>
            <person name="Wedler E."/>
            <person name="Wedler H."/>
            <person name="Woelfl S."/>
            <person name="Harris D.E."/>
            <person name="Bowman S."/>
            <person name="Brown D."/>
            <person name="Churcher C.M."/>
            <person name="Connor R."/>
            <person name="Dedman K."/>
            <person name="Gentles S."/>
            <person name="Hamlin N."/>
            <person name="Hunt S."/>
            <person name="Jones L."/>
            <person name="McDonald S."/>
            <person name="Murphy L.D."/>
            <person name="Niblett D."/>
            <person name="Odell C."/>
            <person name="Oliver K."/>
            <person name="Rajandream M.A."/>
            <person name="Richards C."/>
            <person name="Shore L."/>
            <person name="Walsh S.V."/>
            <person name="Barrell B.G."/>
            <person name="Dietrich F.S."/>
            <person name="Mulligan J.T."/>
            <person name="Allen E."/>
            <person name="Araujo R."/>
            <person name="Aviles E."/>
            <person name="Berno A."/>
            <person name="Carpenter J."/>
            <person name="Chen E."/>
            <person name="Cherry J.M."/>
            <person name="Chung E."/>
            <person name="Duncan M."/>
            <person name="Hunicke-Smith S."/>
            <person name="Hyman R.W."/>
            <person name="Komp C."/>
            <person name="Lashkari D."/>
            <person name="Lew H."/>
            <person name="Lin D."/>
            <person name="Mosedale D."/>
            <person name="Nakahara K."/>
            <person name="Namath A."/>
            <person name="Oefner P."/>
            <person name="Oh C."/>
            <person name="Petel F.X."/>
            <person name="Roberts D."/>
            <person name="Schramm S."/>
            <person name="Schroeder M."/>
            <person name="Shogren T."/>
            <person name="Shroff N."/>
            <person name="Winant A."/>
            <person name="Yelton M.A."/>
            <person name="Botstein D."/>
            <person name="Davis R.W."/>
            <person name="Johnston M."/>
            <person name="Andrews S."/>
            <person name="Brinkman R."/>
            <person name="Cooper J."/>
            <person name="Ding H."/>
            <person name="Du Z."/>
            <person name="Favello A."/>
            <person name="Fulton L."/>
            <person name="Gattung S."/>
            <person name="Greco T."/>
            <person name="Hallsworth K."/>
            <person name="Hawkins J."/>
            <person name="Hillier L.W."/>
            <person name="Jier M."/>
            <person name="Johnson D."/>
            <person name="Johnston L."/>
            <person name="Kirsten J."/>
            <person name="Kucaba T."/>
            <person name="Langston Y."/>
            <person name="Latreille P."/>
            <person name="Le T."/>
            <person name="Mardis E."/>
            <person name="Menezes S."/>
            <person name="Miller N."/>
            <person name="Nhan M."/>
            <person name="Pauley A."/>
            <person name="Peluso D."/>
            <person name="Rifkin L."/>
            <person name="Riles L."/>
            <person name="Taich A."/>
            <person name="Trevaskis E."/>
            <person name="Vignati D."/>
            <person name="Wilcox L."/>
            <person name="Wohldman P."/>
            <person name="Vaudin M."/>
            <person name="Wilson R."/>
            <person name="Waterston R."/>
            <person name="Albermann K."/>
            <person name="Hani J."/>
            <person name="Heumann K."/>
            <person name="Kleine K."/>
            <person name="Mewes H.-W."/>
            <person name="Zollner A."/>
            <person name="Zaccaria P."/>
        </authorList>
    </citation>
    <scope>NUCLEOTIDE SEQUENCE [LARGE SCALE GENOMIC DNA]</scope>
    <source>
        <strain>ATCC 204508 / S288c</strain>
    </source>
</reference>
<reference key="4">
    <citation type="journal article" date="2014" name="G3 (Bethesda)">
        <title>The reference genome sequence of Saccharomyces cerevisiae: Then and now.</title>
        <authorList>
            <person name="Engel S.R."/>
            <person name="Dietrich F.S."/>
            <person name="Fisk D.G."/>
            <person name="Binkley G."/>
            <person name="Balakrishnan R."/>
            <person name="Costanzo M.C."/>
            <person name="Dwight S.S."/>
            <person name="Hitz B.C."/>
            <person name="Karra K."/>
            <person name="Nash R.S."/>
            <person name="Weng S."/>
            <person name="Wong E.D."/>
            <person name="Lloyd P."/>
            <person name="Skrzypek M.S."/>
            <person name="Miyasato S.R."/>
            <person name="Simison M."/>
            <person name="Cherry J.M."/>
        </authorList>
    </citation>
    <scope>GENOME REANNOTATION</scope>
    <source>
        <strain>ATCC 204508 / S288c</strain>
    </source>
</reference>
<reference key="5">
    <citation type="journal article" date="1995" name="Biochimie">
        <title>Location of N2,N2-dimethylguanosine-specific tRNA methyltransferase.</title>
        <authorList>
            <person name="Rose A.M."/>
            <person name="Belford H.G."/>
            <person name="Shen W.C."/>
            <person name="Greer C.L."/>
            <person name="Hopper A.K."/>
            <person name="Martin N.C."/>
        </authorList>
    </citation>
    <scope>SUBCELLULAR LOCATION</scope>
</reference>
<reference key="6">
    <citation type="journal article" date="1999" name="Gene">
        <title>Caenorhabditis elegans ZC376.5 encodes a tRNA (m2/2G(26))dimethyltransferance in which (246)arginine is important for the enzyme activity.</title>
        <authorList>
            <person name="Liu J.M."/>
            <person name="Zhou G.Q."/>
            <person name="Straby K.B."/>
        </authorList>
    </citation>
    <scope>MUTAGENESIS OF LYS-290</scope>
</reference>
<reference key="7">
    <citation type="journal article" date="2003" name="Nature">
        <title>Global analysis of protein expression in yeast.</title>
        <authorList>
            <person name="Ghaemmaghami S."/>
            <person name="Huh W.-K."/>
            <person name="Bower K."/>
            <person name="Howson R.W."/>
            <person name="Belle A."/>
            <person name="Dephoure N."/>
            <person name="O'Shea E.K."/>
            <person name="Weissman J.S."/>
        </authorList>
    </citation>
    <scope>LEVEL OF PROTEIN EXPRESSION [LARGE SCALE ANALYSIS]</scope>
</reference>
<reference key="8">
    <citation type="journal article" date="2005" name="Genetics">
        <title>Genome-wide screen for inner nuclear membrane protein targeting in Saccharomyces cerevisiae: roles for N-acetylation and an integral membrane protein.</title>
        <authorList>
            <person name="Murthi A."/>
            <person name="Hopper A.K."/>
        </authorList>
    </citation>
    <scope>ACETYLATION AT MET-1 (ISOFORM 2)</scope>
    <scope>SUBCELLULAR LOCATION</scope>
</reference>
<reference key="9">
    <citation type="journal article" date="2009" name="Traffic">
        <title>Mechanism and a peptide motif for targeting peripheral proteins to the yeast inner nuclear membrane.</title>
        <authorList>
            <person name="Lai T.P."/>
            <person name="Stauffer K.A."/>
            <person name="Murthi A."/>
            <person name="Shaheen H.H."/>
            <person name="Peng G."/>
            <person name="Martin N.C."/>
            <person name="Hopper A.K."/>
        </authorList>
    </citation>
    <scope>SUBCELLULAR LOCATION</scope>
</reference>
<sequence>MEGFFRIPLKRANLHGMLKAAISKIKANFTAYGAPRINIEDFNIVKEGKAEILFPKKETVFYNPIQQFNRDLSVTCIKAWDNLYGEECGQKRNNKKSKKKRCAETNDDSSKRQKMGNGSPKEAVGNSNRNEPYINILEALSATGLRAIRYAHEIPHVREVIANDLLPEAVESIKRNVEYNSVENIVKPNLDDANVLMYRNKATNNKFHVIDLDPYGTVTPFVDAAIQSIEEGGLMLVTCTDLSVLAGNGYPEKCFALYGGANMVSHESTHESALRLVLNLLKQTAAKYKKTVEPLLSLSIDFYVRVFVKVKTSPIEVKNVMSSTMTTYHCSRCGSYHNQPLGRISQREGRNNKTFTKYSVAQGPPVDTKCKFCEGTYHLAGPMYAGPLHNKEFIEEVLRINKEEHRDQDDTYGTRKRIEGMLSLAKNELSDSPFYFSPNHIASVIKLQVPPLKKVVAGLGSLGFECSLTHAQPSSLKTNAPWDAIWYVMQKCDDEKKDLSKMNPNTTGYKILSAMPGWLSGTVKSEYDSKLSFAPNEQSGNIEKLRKLKIVRYQENPTKNWGPKARPNTS</sequence>
<feature type="transit peptide" description="Mitochondrion">
    <location>
        <begin position="1"/>
        <end status="unknown"/>
    </location>
</feature>
<feature type="chain" id="PRO_0000035779" description="tRNA (guanine(26)-N(2))-dimethyltransferase, mitochondrial">
    <location>
        <begin status="unknown"/>
        <end position="570"/>
    </location>
</feature>
<feature type="domain" description="Trm1 methyltransferase" evidence="2">
    <location>
        <begin position="43"/>
        <end position="489"/>
    </location>
</feature>
<feature type="region of interest" description="Disordered" evidence="3">
    <location>
        <begin position="91"/>
        <end position="128"/>
    </location>
</feature>
<feature type="region of interest" description="Required and sufficient for inner nuclear membrane localization">
    <location>
        <begin position="133"/>
        <end position="155"/>
    </location>
</feature>
<feature type="short sequence motif" description="Nuclear localization signal">
    <location>
        <begin position="95"/>
        <end position="101"/>
    </location>
</feature>
<feature type="compositionally biased region" description="Basic residues" evidence="3">
    <location>
        <begin position="92"/>
        <end position="101"/>
    </location>
</feature>
<feature type="compositionally biased region" description="Basic and acidic residues" evidence="3">
    <location>
        <begin position="102"/>
        <end position="111"/>
    </location>
</feature>
<feature type="binding site" evidence="1">
    <location>
        <position position="70"/>
    </location>
    <ligand>
        <name>S-adenosyl-L-methionine</name>
        <dbReference type="ChEBI" id="CHEBI:59789"/>
    </ligand>
</feature>
<feature type="binding site" evidence="1">
    <location>
        <position position="146"/>
    </location>
    <ligand>
        <name>S-adenosyl-L-methionine</name>
        <dbReference type="ChEBI" id="CHEBI:59789"/>
    </ligand>
</feature>
<feature type="binding site" evidence="1">
    <location>
        <position position="164"/>
    </location>
    <ligand>
        <name>S-adenosyl-L-methionine</name>
        <dbReference type="ChEBI" id="CHEBI:59789"/>
    </ligand>
</feature>
<feature type="binding site" evidence="1">
    <location>
        <position position="195"/>
    </location>
    <ligand>
        <name>S-adenosyl-L-methionine</name>
        <dbReference type="ChEBI" id="CHEBI:59789"/>
    </ligand>
</feature>
<feature type="binding site" evidence="1">
    <location>
        <position position="330"/>
    </location>
    <ligand>
        <name>Zn(2+)</name>
        <dbReference type="ChEBI" id="CHEBI:29105"/>
    </ligand>
</feature>
<feature type="binding site" evidence="1">
    <location>
        <position position="333"/>
    </location>
    <ligand>
        <name>Zn(2+)</name>
        <dbReference type="ChEBI" id="CHEBI:29105"/>
    </ligand>
</feature>
<feature type="binding site" evidence="1">
    <location>
        <position position="370"/>
    </location>
    <ligand>
        <name>Zn(2+)</name>
        <dbReference type="ChEBI" id="CHEBI:29105"/>
    </ligand>
</feature>
<feature type="binding site" evidence="1">
    <location>
        <position position="373"/>
    </location>
    <ligand>
        <name>Zn(2+)</name>
        <dbReference type="ChEBI" id="CHEBI:29105"/>
    </ligand>
</feature>
<feature type="splice variant" id="VSP_018902" description="In isoform 2." evidence="10">
    <location>
        <begin position="1"/>
        <end position="16"/>
    </location>
</feature>
<feature type="sequence variant" description="In strain: D4 and YF+.">
    <original>T</original>
    <variation>S</variation>
    <location>
        <position position="203"/>
    </location>
</feature>
<feature type="sequence variant" description="In strain: D4; loss of activity.">
    <original>S</original>
    <variation>L</variation>
    <location>
        <position position="467"/>
    </location>
</feature>
<feature type="sequence variant" description="In strain: D4 and YF+.">
    <original>G</original>
    <variation>R</variation>
    <location>
        <position position="517"/>
    </location>
</feature>
<feature type="mutagenesis site" description="Loss of activity." evidence="4">
    <original>K</original>
    <variation>A</variation>
    <location>
        <position position="290"/>
    </location>
</feature>
<feature type="modified residue" description="N-acetylmethionine" evidence="6">
    <location sequence="P15565-2">
        <position position="1"/>
    </location>
</feature>
<evidence type="ECO:0000250" key="1">
    <source>
        <dbReference type="UniProtKB" id="O67010"/>
    </source>
</evidence>
<evidence type="ECO:0000255" key="2">
    <source>
        <dbReference type="PROSITE-ProRule" id="PRU00958"/>
    </source>
</evidence>
<evidence type="ECO:0000256" key="3">
    <source>
        <dbReference type="SAM" id="MobiDB-lite"/>
    </source>
</evidence>
<evidence type="ECO:0000269" key="4">
    <source>
    </source>
</evidence>
<evidence type="ECO:0000269" key="5">
    <source>
    </source>
</evidence>
<evidence type="ECO:0000269" key="6">
    <source>
    </source>
</evidence>
<evidence type="ECO:0000269" key="7">
    <source>
    </source>
</evidence>
<evidence type="ECO:0000269" key="8">
    <source>
    </source>
</evidence>
<evidence type="ECO:0000269" key="9">
    <source>
    </source>
</evidence>
<evidence type="ECO:0000305" key="10"/>
<accession>P15565</accession>
<accession>D6VSA6</accession>
<accession>Q9URQ7</accession>
<accession>Q9URQ8</accession>
<comment type="function">
    <text evidence="9">Dimethylates a single guanine residue at position 26 of most tRNAs using S-adenosyl-L-methionine as donor of the methyl groups. Required for the modification of both mitochondrial and cytoplasmic tRNAs.</text>
</comment>
<comment type="catalytic activity">
    <reaction evidence="2 9">
        <text>guanosine(26) in tRNA + 2 S-adenosyl-L-methionine = N(2)-dimethylguanosine(26) in tRNA + 2 S-adenosyl-L-homocysteine + 2 H(+)</text>
        <dbReference type="Rhea" id="RHEA:43140"/>
        <dbReference type="Rhea" id="RHEA-COMP:10359"/>
        <dbReference type="Rhea" id="RHEA-COMP:10360"/>
        <dbReference type="ChEBI" id="CHEBI:15378"/>
        <dbReference type="ChEBI" id="CHEBI:57856"/>
        <dbReference type="ChEBI" id="CHEBI:59789"/>
        <dbReference type="ChEBI" id="CHEBI:74269"/>
        <dbReference type="ChEBI" id="CHEBI:74513"/>
        <dbReference type="EC" id="2.1.1.216"/>
    </reaction>
</comment>
<comment type="subcellular location">
    <molecule>Isoform 1</molecule>
    <subcellularLocation>
        <location evidence="8">Mitochondrion</location>
    </subcellularLocation>
</comment>
<comment type="subcellular location">
    <molecule>Isoform 2</molecule>
    <subcellularLocation>
        <location evidence="8">Mitochondrion</location>
    </subcellularLocation>
    <subcellularLocation>
        <location evidence="7 8">Nucleus inner membrane</location>
        <topology evidence="7 8">Peripheral membrane protein</topology>
        <orientation evidence="7 8">Nucleoplasmic side</orientation>
    </subcellularLocation>
    <text evidence="8">Predominantly targeted to the nucleus.</text>
</comment>
<comment type="alternative products">
    <event type="alternative initiation"/>
    <isoform>
        <id>P15565-1</id>
        <name>1</name>
        <sequence type="displayed"/>
    </isoform>
    <isoform>
        <id>P15565-2</id>
        <name>2</name>
        <sequence type="described" ref="VSP_018902"/>
    </isoform>
</comment>
<comment type="PTM">
    <molecule>Isoform 2</molecule>
    <text evidence="6">N-acetylated by NatC at position 1. N-acetylation is necessary for targeting of the protein to the inner nuclear membrane.</text>
</comment>
<comment type="miscellaneous">
    <text evidence="5">Present with 15500 molecules/cell in log phase SD medium.</text>
</comment>
<comment type="similarity">
    <text evidence="2">Belongs to the class I-like SAM-binding methyltransferase superfamily. Trm1 family.</text>
</comment>
<gene>
    <name type="primary">TRM1</name>
    <name type="ordered locus">YDR120C</name>
    <name type="ORF">YD9727.15C</name>
</gene>